<keyword id="KW-0134">Cell wall</keyword>
<keyword id="KW-0963">Cytoplasm</keyword>
<keyword id="KW-0324">Glycolysis</keyword>
<keyword id="KW-0456">Lyase</keyword>
<keyword id="KW-0460">Magnesium</keyword>
<keyword id="KW-0479">Metal-binding</keyword>
<keyword id="KW-0964">Secreted</keyword>
<reference evidence="3" key="1">
    <citation type="submission" date="2010-04" db="EMBL/GenBank/DDBJ databases">
        <title>The genome sequence of Listeria monocytogenes strain 10403S.</title>
        <authorList>
            <consortium name="The Broad Institute Genome Sequencing Platform"/>
            <consortium name="The Broad Institute Genome Sequencing Center for Infectious Disease"/>
            <person name="Borowsky M."/>
            <person name="Borodovsky M."/>
            <person name="Young S.K."/>
            <person name="Zeng Q."/>
            <person name="Koehrsen M."/>
            <person name="Fitzgerald M."/>
            <person name="Wiedmann M."/>
            <person name="Swaminathan B."/>
            <person name="Lauer P."/>
            <person name="Portnoy D."/>
            <person name="Cossart P."/>
            <person name="Buchrieser C."/>
            <person name="Higgins D."/>
            <person name="Abouelleil A."/>
            <person name="Alvarado L."/>
            <person name="Arachchi H.M."/>
            <person name="Berlin A."/>
            <person name="Borenstein D."/>
            <person name="Brown A."/>
            <person name="Chapman S.B."/>
            <person name="Chen Z."/>
            <person name="Dunbar C.D."/>
            <person name="Engels R."/>
            <person name="Freedman E."/>
            <person name="Gearin G."/>
            <person name="Gellesch M."/>
            <person name="Goldberg J."/>
            <person name="Griggs A."/>
            <person name="Gujja S."/>
            <person name="Heilman E."/>
            <person name="Heiman D."/>
            <person name="Howarth C."/>
            <person name="Jen D."/>
            <person name="Larson L."/>
            <person name="Lui A."/>
            <person name="MacDonald J."/>
            <person name="Mehta T."/>
            <person name="Montmayeur A."/>
            <person name="Neiman D."/>
            <person name="Park D."/>
            <person name="Pearson M."/>
            <person name="Priest M."/>
            <person name="Richards J."/>
            <person name="Roberts A."/>
            <person name="Saif S."/>
            <person name="Shea T."/>
            <person name="Shenoy N."/>
            <person name="Sisk P."/>
            <person name="Stolte C."/>
            <person name="Sykes S."/>
            <person name="Walk T."/>
            <person name="White J."/>
            <person name="Yandava C."/>
            <person name="Haas B."/>
            <person name="Nusbaum C."/>
            <person name="Birren B."/>
        </authorList>
    </citation>
    <scope>NUCLEOTIDE SEQUENCE [LARGE SCALE GENOMIC DNA]</scope>
    <source>
        <strain>10403S</strain>
    </source>
</reference>
<reference key="2">
    <citation type="journal article" date="2003" name="Proc. Natl. Acad. Sci. U.S.A.">
        <title>SecA2-dependent secretion of autolytic enzymes promotes Listeria monocytogenes pathogenesis.</title>
        <authorList>
            <person name="Lenz L.L."/>
            <person name="Mohammadi S."/>
            <person name="Geissler A."/>
            <person name="Portnoy D.A."/>
        </authorList>
    </citation>
    <scope>IDENTIFICATION BY MASS SPECTROMETRY</scope>
    <scope>SUBCELLULAR LOCATION</scope>
    <scope>SECRETION</scope>
    <source>
        <strain>10403S</strain>
    </source>
</reference>
<dbReference type="EC" id="4.2.1.11" evidence="1"/>
<dbReference type="EMBL" id="CP002002">
    <property type="protein sequence ID" value="AEO07431.1"/>
    <property type="molecule type" value="Genomic_DNA"/>
</dbReference>
<dbReference type="RefSeq" id="WP_003727923.1">
    <property type="nucleotide sequence ID" value="NC_017544.1"/>
</dbReference>
<dbReference type="SMR" id="A0A0H3GN27"/>
<dbReference type="GeneID" id="93235861"/>
<dbReference type="KEGG" id="lmt:LMRG_01793"/>
<dbReference type="HOGENOM" id="CLU_031223_2_1_9"/>
<dbReference type="UniPathway" id="UPA00109">
    <property type="reaction ID" value="UER00187"/>
</dbReference>
<dbReference type="Proteomes" id="UP000001288">
    <property type="component" value="Chromosome"/>
</dbReference>
<dbReference type="GO" id="GO:0009986">
    <property type="term" value="C:cell surface"/>
    <property type="evidence" value="ECO:0007669"/>
    <property type="project" value="UniProtKB-SubCell"/>
</dbReference>
<dbReference type="GO" id="GO:0005576">
    <property type="term" value="C:extracellular region"/>
    <property type="evidence" value="ECO:0007669"/>
    <property type="project" value="UniProtKB-SubCell"/>
</dbReference>
<dbReference type="GO" id="GO:0000015">
    <property type="term" value="C:phosphopyruvate hydratase complex"/>
    <property type="evidence" value="ECO:0007669"/>
    <property type="project" value="InterPro"/>
</dbReference>
<dbReference type="GO" id="GO:0000287">
    <property type="term" value="F:magnesium ion binding"/>
    <property type="evidence" value="ECO:0007669"/>
    <property type="project" value="UniProtKB-UniRule"/>
</dbReference>
<dbReference type="GO" id="GO:0004634">
    <property type="term" value="F:phosphopyruvate hydratase activity"/>
    <property type="evidence" value="ECO:0007669"/>
    <property type="project" value="UniProtKB-UniRule"/>
</dbReference>
<dbReference type="GO" id="GO:0006096">
    <property type="term" value="P:glycolytic process"/>
    <property type="evidence" value="ECO:0007669"/>
    <property type="project" value="UniProtKB-UniRule"/>
</dbReference>
<dbReference type="CDD" id="cd03313">
    <property type="entry name" value="enolase"/>
    <property type="match status" value="1"/>
</dbReference>
<dbReference type="FunFam" id="3.20.20.120:FF:000001">
    <property type="entry name" value="Enolase"/>
    <property type="match status" value="1"/>
</dbReference>
<dbReference type="FunFam" id="3.30.390.10:FF:000001">
    <property type="entry name" value="Enolase"/>
    <property type="match status" value="1"/>
</dbReference>
<dbReference type="Gene3D" id="3.20.20.120">
    <property type="entry name" value="Enolase-like C-terminal domain"/>
    <property type="match status" value="1"/>
</dbReference>
<dbReference type="Gene3D" id="3.30.390.10">
    <property type="entry name" value="Enolase-like, N-terminal domain"/>
    <property type="match status" value="1"/>
</dbReference>
<dbReference type="HAMAP" id="MF_00318">
    <property type="entry name" value="Enolase"/>
    <property type="match status" value="1"/>
</dbReference>
<dbReference type="InterPro" id="IPR000941">
    <property type="entry name" value="Enolase"/>
</dbReference>
<dbReference type="InterPro" id="IPR036849">
    <property type="entry name" value="Enolase-like_C_sf"/>
</dbReference>
<dbReference type="InterPro" id="IPR029017">
    <property type="entry name" value="Enolase-like_N"/>
</dbReference>
<dbReference type="InterPro" id="IPR020810">
    <property type="entry name" value="Enolase_C"/>
</dbReference>
<dbReference type="InterPro" id="IPR020809">
    <property type="entry name" value="Enolase_CS"/>
</dbReference>
<dbReference type="InterPro" id="IPR020811">
    <property type="entry name" value="Enolase_N"/>
</dbReference>
<dbReference type="NCBIfam" id="TIGR01060">
    <property type="entry name" value="eno"/>
    <property type="match status" value="1"/>
</dbReference>
<dbReference type="PANTHER" id="PTHR11902">
    <property type="entry name" value="ENOLASE"/>
    <property type="match status" value="1"/>
</dbReference>
<dbReference type="PANTHER" id="PTHR11902:SF1">
    <property type="entry name" value="ENOLASE"/>
    <property type="match status" value="1"/>
</dbReference>
<dbReference type="Pfam" id="PF00113">
    <property type="entry name" value="Enolase_C"/>
    <property type="match status" value="1"/>
</dbReference>
<dbReference type="Pfam" id="PF03952">
    <property type="entry name" value="Enolase_N"/>
    <property type="match status" value="1"/>
</dbReference>
<dbReference type="PIRSF" id="PIRSF001400">
    <property type="entry name" value="Enolase"/>
    <property type="match status" value="1"/>
</dbReference>
<dbReference type="PRINTS" id="PR00148">
    <property type="entry name" value="ENOLASE"/>
</dbReference>
<dbReference type="SFLD" id="SFLDF00002">
    <property type="entry name" value="enolase"/>
    <property type="match status" value="1"/>
</dbReference>
<dbReference type="SFLD" id="SFLDG00178">
    <property type="entry name" value="enolase"/>
    <property type="match status" value="1"/>
</dbReference>
<dbReference type="SMART" id="SM01192">
    <property type="entry name" value="Enolase_C"/>
    <property type="match status" value="1"/>
</dbReference>
<dbReference type="SMART" id="SM01193">
    <property type="entry name" value="Enolase_N"/>
    <property type="match status" value="1"/>
</dbReference>
<dbReference type="SUPFAM" id="SSF51604">
    <property type="entry name" value="Enolase C-terminal domain-like"/>
    <property type="match status" value="1"/>
</dbReference>
<dbReference type="SUPFAM" id="SSF54826">
    <property type="entry name" value="Enolase N-terminal domain-like"/>
    <property type="match status" value="1"/>
</dbReference>
<dbReference type="PROSITE" id="PS00164">
    <property type="entry name" value="ENOLASE"/>
    <property type="match status" value="1"/>
</dbReference>
<accession>A0A0H3GN27</accession>
<feature type="chain" id="PRO_0000460294" description="Enolase">
    <location>
        <begin position="1"/>
        <end position="430"/>
    </location>
</feature>
<feature type="active site" description="Proton donor" evidence="1">
    <location>
        <position position="205"/>
    </location>
</feature>
<feature type="active site" description="Proton acceptor" evidence="1">
    <location>
        <position position="339"/>
    </location>
</feature>
<feature type="binding site" evidence="1">
    <location>
        <position position="163"/>
    </location>
    <ligand>
        <name>(2R)-2-phosphoglycerate</name>
        <dbReference type="ChEBI" id="CHEBI:58289"/>
    </ligand>
</feature>
<feature type="binding site" evidence="1">
    <location>
        <position position="242"/>
    </location>
    <ligand>
        <name>Mg(2+)</name>
        <dbReference type="ChEBI" id="CHEBI:18420"/>
    </ligand>
</feature>
<feature type="binding site" evidence="1">
    <location>
        <position position="287"/>
    </location>
    <ligand>
        <name>Mg(2+)</name>
        <dbReference type="ChEBI" id="CHEBI:18420"/>
    </ligand>
</feature>
<feature type="binding site" evidence="1">
    <location>
        <position position="314"/>
    </location>
    <ligand>
        <name>Mg(2+)</name>
        <dbReference type="ChEBI" id="CHEBI:18420"/>
    </ligand>
</feature>
<feature type="binding site" evidence="1">
    <location>
        <position position="339"/>
    </location>
    <ligand>
        <name>(2R)-2-phosphoglycerate</name>
        <dbReference type="ChEBI" id="CHEBI:58289"/>
    </ligand>
</feature>
<feature type="binding site" evidence="1">
    <location>
        <position position="368"/>
    </location>
    <ligand>
        <name>(2R)-2-phosphoglycerate</name>
        <dbReference type="ChEBI" id="CHEBI:58289"/>
    </ligand>
</feature>
<feature type="binding site" evidence="1">
    <location>
        <position position="369"/>
    </location>
    <ligand>
        <name>(2R)-2-phosphoglycerate</name>
        <dbReference type="ChEBI" id="CHEBI:58289"/>
    </ligand>
</feature>
<feature type="binding site" evidence="1">
    <location>
        <position position="390"/>
    </location>
    <ligand>
        <name>(2R)-2-phosphoglycerate</name>
        <dbReference type="ChEBI" id="CHEBI:58289"/>
    </ligand>
</feature>
<gene>
    <name evidence="1" type="primary">eno</name>
    <name evidence="3" type="ordered locus">LMRG_01793</name>
</gene>
<name>ENO_LISM4</name>
<protein>
    <recommendedName>
        <fullName evidence="1">Enolase</fullName>
        <ecNumber evidence="1">4.2.1.11</ecNumber>
    </recommendedName>
    <alternativeName>
        <fullName evidence="1">2-phospho-D-glycerate hydro-lyase</fullName>
    </alternativeName>
    <alternativeName>
        <fullName evidence="1">2-phosphoglycerate dehydratase</fullName>
    </alternativeName>
</protein>
<sequence length="430" mass="46472">MSIITEVYAREVLDSRGNPTVEVEVYTEAGAFGRALVPSGASTGEYEAVELRDGDKARYLGKGVLKAVENVNDIIADKIIGFDVTDQIGIDKAMIELDGTPNKGKLGANAILGVSLAAARAAADELGVHLYEYLGGVNGKVLPVPMMNILNGGEHADNNVDVQEFMVMPVGAPNFKEALRMGAEILHALKAVLKGKGLNTGVGDEGGFAPNLKSNEEALETIMQAIKDAGYKPGEEVKLAMDAASSEFYNRETGKYELKGEGVTRTSEEMVTWYEEMITKYPIISIEDGLDENDWDGFKLLTERIGDRVQLVGDDLFVTNTTKLKEGIEKGIANSILIKVNQIGTLTETLDAIEMAKRAGYTAVISHRSGETEDSTIADIAVATNAGQIKTGAPTRTDRVAKYNQLLRIEDNLADLAEYHGNDTFYNLKK</sequence>
<proteinExistence type="evidence at protein level"/>
<comment type="function">
    <text evidence="1">Catalyzes the reversible conversion of 2-phosphoglycerate (2-PG) into phosphoenolpyruvate (PEP). It is essential for the degradation of carbohydrates via glycolysis.</text>
</comment>
<comment type="catalytic activity">
    <reaction evidence="1">
        <text>(2R)-2-phosphoglycerate = phosphoenolpyruvate + H2O</text>
        <dbReference type="Rhea" id="RHEA:10164"/>
        <dbReference type="ChEBI" id="CHEBI:15377"/>
        <dbReference type="ChEBI" id="CHEBI:58289"/>
        <dbReference type="ChEBI" id="CHEBI:58702"/>
        <dbReference type="EC" id="4.2.1.11"/>
    </reaction>
</comment>
<comment type="cofactor">
    <cofactor evidence="1">
        <name>Mg(2+)</name>
        <dbReference type="ChEBI" id="CHEBI:18420"/>
    </cofactor>
    <text evidence="1">Binds a second Mg(2+) ion via substrate during catalysis.</text>
</comment>
<comment type="pathway">
    <text evidence="1">Carbohydrate degradation; glycolysis; pyruvate from D-glyceraldehyde 3-phosphate: step 4/5.</text>
</comment>
<comment type="subcellular location">
    <subcellularLocation>
        <location evidence="1 2">Cell surface</location>
    </subcellularLocation>
    <subcellularLocation>
        <location evidence="2">Secreted</location>
        <location evidence="2">Cell wall</location>
    </subcellularLocation>
    <subcellularLocation>
        <location evidence="1">Cytoplasm</location>
    </subcellularLocation>
    <subcellularLocation>
        <location evidence="1 2">Secreted</location>
    </subcellularLocation>
    <text evidence="2">Fractions of enolase are present in both the cytoplasm and on the cell surface (PubMed:14527997). The export of enolase depends on secA2 (PubMed:14527997).</text>
</comment>
<comment type="similarity">
    <text evidence="1">Belongs to the enolase family.</text>
</comment>
<organism>
    <name type="scientific">Listeria monocytogenes serotype 1/2a (strain 10403S)</name>
    <dbReference type="NCBI Taxonomy" id="393133"/>
    <lineage>
        <taxon>Bacteria</taxon>
        <taxon>Bacillati</taxon>
        <taxon>Bacillota</taxon>
        <taxon>Bacilli</taxon>
        <taxon>Bacillales</taxon>
        <taxon>Listeriaceae</taxon>
        <taxon>Listeria</taxon>
    </lineage>
</organism>
<evidence type="ECO:0000255" key="1">
    <source>
        <dbReference type="HAMAP-Rule" id="MF_00318"/>
    </source>
</evidence>
<evidence type="ECO:0000269" key="2">
    <source>
    </source>
</evidence>
<evidence type="ECO:0000312" key="3">
    <source>
        <dbReference type="EMBL" id="AEO07431.1"/>
    </source>
</evidence>